<comment type="function">
    <text evidence="2">Catalyzes the last step of arginine biosynthesis, the conversion of argininosuccinate into L-arginine and fumarate.</text>
</comment>
<comment type="catalytic activity">
    <reaction evidence="1 2">
        <text>2-(N(omega)-L-arginino)succinate = fumarate + L-arginine</text>
        <dbReference type="Rhea" id="RHEA:24020"/>
        <dbReference type="ChEBI" id="CHEBI:29806"/>
        <dbReference type="ChEBI" id="CHEBI:32682"/>
        <dbReference type="ChEBI" id="CHEBI:57472"/>
        <dbReference type="EC" id="4.3.2.1"/>
    </reaction>
    <physiologicalReaction direction="left-to-right" evidence="2">
        <dbReference type="Rhea" id="RHEA:24021"/>
    </physiologicalReaction>
</comment>
<comment type="activity regulation">
    <text evidence="2">Strongly inhibited by L-arginine (PubMed:35583703). Inhibitory effects are lowered at pH 7.0 compared to those at pH 8.0 (PubMed:35583703). At 45 degrees Celsius and pH 8.0, activity decreases to 94%, 74% and 37% in the presence of 0.6 mM, 2.8 mM and 10 mM arginine, respectively (PubMed:35583703). Activity also decreases to 86% in the presence of 10 mM sodium succinate or sodium citrate (PubMed:35583703). Activity does not decrease in the presence of 1 mM or 10 mM L-lysine, which has a similar structure to arginine (PubMed:35583703).</text>
</comment>
<comment type="biophysicochemical properties">
    <kinetics>
        <KM evidence="2">0.182 mM for argininosuccinate (at 45 degrees Celsius and pH 8.0)</KM>
        <text evidence="2">kcat is 6.78 sec(-1) with argininosuccinate as substrate.</text>
    </kinetics>
    <phDependence>
        <text evidence="2">Optimum pH is 8.0 (PubMed:35583703). Shows more than 35% enzymatic activity in terms of relative activity at pH 7.5-9.5 (PubMed:35583703).</text>
    </phDependence>
    <temperatureDependence>
        <text evidence="2">Optimum temperature is 45 degrees Celsius (PubMed:35583703). Shows more than 35% enzymatic activity in terms of relative activity at 20-50 degrees Celsius (PubMed:35583703). Inactive above 55 degrees Celsius (PubMed:35583703).</text>
    </temperatureDependence>
</comment>
<comment type="pathway">
    <text evidence="1">Amino-acid biosynthesis; L-arginine biosynthesis; L-arginine from L-ornithine and carbamoyl phosphate: step 3/3.</text>
</comment>
<comment type="subcellular location">
    <subcellularLocation>
        <location evidence="1">Cytoplasm</location>
    </subcellularLocation>
</comment>
<comment type="miscellaneous">
    <text evidence="3">A mutant overexpressing this enzyme grows faster than the wild-type strain under photoautotrophic conditions with 5 mM NaNO(3) as a nitrogen source (PubMed:38478146). In contrast, the growth of the mutant is similar under photoautotrophic conditions with 5 mM arginine as a nitrogen source (PubMed:38478146).</text>
</comment>
<comment type="similarity">
    <text evidence="1">Belongs to the lyase 1 family. Argininosuccinate lyase subfamily.</text>
</comment>
<evidence type="ECO:0000255" key="1">
    <source>
        <dbReference type="HAMAP-Rule" id="MF_00006"/>
    </source>
</evidence>
<evidence type="ECO:0000269" key="2">
    <source>
    </source>
</evidence>
<evidence type="ECO:0000269" key="3">
    <source>
    </source>
</evidence>
<evidence type="ECO:0000303" key="4">
    <source>
    </source>
</evidence>
<evidence type="ECO:0000303" key="5">
    <source>
    </source>
</evidence>
<name>ARLY_SYNY3</name>
<gene>
    <name evidence="1 5" type="primary">argH</name>
    <name type="ordered locus">slr1133</name>
</gene>
<dbReference type="EC" id="4.3.2.1" evidence="1 2"/>
<dbReference type="EMBL" id="BA000022">
    <property type="protein sequence ID" value="BAA17284.1"/>
    <property type="molecule type" value="Genomic_DNA"/>
</dbReference>
<dbReference type="PIR" id="S77437">
    <property type="entry name" value="S77437"/>
</dbReference>
<dbReference type="SMR" id="P73257"/>
<dbReference type="FunCoup" id="P73257">
    <property type="interactions" value="398"/>
</dbReference>
<dbReference type="IntAct" id="P73257">
    <property type="interactions" value="1"/>
</dbReference>
<dbReference type="STRING" id="1148.gene:10498147"/>
<dbReference type="PaxDb" id="1148-1652362"/>
<dbReference type="EnsemblBacteria" id="BAA17284">
    <property type="protein sequence ID" value="BAA17284"/>
    <property type="gene ID" value="BAA17284"/>
</dbReference>
<dbReference type="KEGG" id="syn:slr1133"/>
<dbReference type="eggNOG" id="COG0165">
    <property type="taxonomic scope" value="Bacteria"/>
</dbReference>
<dbReference type="InParanoid" id="P73257"/>
<dbReference type="PhylomeDB" id="P73257"/>
<dbReference type="UniPathway" id="UPA00068">
    <property type="reaction ID" value="UER00114"/>
</dbReference>
<dbReference type="Proteomes" id="UP000001425">
    <property type="component" value="Chromosome"/>
</dbReference>
<dbReference type="GO" id="GO:0005829">
    <property type="term" value="C:cytosol"/>
    <property type="evidence" value="ECO:0000318"/>
    <property type="project" value="GO_Central"/>
</dbReference>
<dbReference type="GO" id="GO:0004056">
    <property type="term" value="F:argininosuccinate lyase activity"/>
    <property type="evidence" value="ECO:0000318"/>
    <property type="project" value="GO_Central"/>
</dbReference>
<dbReference type="GO" id="GO:0042450">
    <property type="term" value="P:arginine biosynthetic process via ornithine"/>
    <property type="evidence" value="ECO:0000318"/>
    <property type="project" value="GO_Central"/>
</dbReference>
<dbReference type="GO" id="GO:0006526">
    <property type="term" value="P:L-arginine biosynthetic process"/>
    <property type="evidence" value="ECO:0007669"/>
    <property type="project" value="UniProtKB-UniRule"/>
</dbReference>
<dbReference type="CDD" id="cd01359">
    <property type="entry name" value="Argininosuccinate_lyase"/>
    <property type="match status" value="1"/>
</dbReference>
<dbReference type="FunFam" id="1.10.275.10:FF:000002">
    <property type="entry name" value="Argininosuccinate lyase"/>
    <property type="match status" value="1"/>
</dbReference>
<dbReference type="FunFam" id="1.10.40.30:FF:000001">
    <property type="entry name" value="Argininosuccinate lyase"/>
    <property type="match status" value="1"/>
</dbReference>
<dbReference type="FunFam" id="1.20.200.10:FF:000015">
    <property type="entry name" value="argininosuccinate lyase isoform X2"/>
    <property type="match status" value="1"/>
</dbReference>
<dbReference type="Gene3D" id="1.10.40.30">
    <property type="entry name" value="Fumarase/aspartase (C-terminal domain)"/>
    <property type="match status" value="1"/>
</dbReference>
<dbReference type="Gene3D" id="1.20.200.10">
    <property type="entry name" value="Fumarase/aspartase (Central domain)"/>
    <property type="match status" value="1"/>
</dbReference>
<dbReference type="Gene3D" id="1.10.275.10">
    <property type="entry name" value="Fumarase/aspartase (N-terminal domain)"/>
    <property type="match status" value="1"/>
</dbReference>
<dbReference type="HAMAP" id="MF_00006">
    <property type="entry name" value="Arg_succ_lyase"/>
    <property type="match status" value="1"/>
</dbReference>
<dbReference type="InterPro" id="IPR029419">
    <property type="entry name" value="Arg_succ_lyase_C"/>
</dbReference>
<dbReference type="InterPro" id="IPR009049">
    <property type="entry name" value="Argininosuccinate_lyase"/>
</dbReference>
<dbReference type="InterPro" id="IPR024083">
    <property type="entry name" value="Fumarase/histidase_N"/>
</dbReference>
<dbReference type="InterPro" id="IPR020557">
    <property type="entry name" value="Fumarate_lyase_CS"/>
</dbReference>
<dbReference type="InterPro" id="IPR000362">
    <property type="entry name" value="Fumarate_lyase_fam"/>
</dbReference>
<dbReference type="InterPro" id="IPR022761">
    <property type="entry name" value="Fumarate_lyase_N"/>
</dbReference>
<dbReference type="InterPro" id="IPR008948">
    <property type="entry name" value="L-Aspartase-like"/>
</dbReference>
<dbReference type="NCBIfam" id="TIGR00838">
    <property type="entry name" value="argH"/>
    <property type="match status" value="1"/>
</dbReference>
<dbReference type="PANTHER" id="PTHR43814">
    <property type="entry name" value="ARGININOSUCCINATE LYASE"/>
    <property type="match status" value="1"/>
</dbReference>
<dbReference type="PANTHER" id="PTHR43814:SF1">
    <property type="entry name" value="ARGININOSUCCINATE LYASE"/>
    <property type="match status" value="1"/>
</dbReference>
<dbReference type="Pfam" id="PF14698">
    <property type="entry name" value="ASL_C2"/>
    <property type="match status" value="1"/>
</dbReference>
<dbReference type="Pfam" id="PF00206">
    <property type="entry name" value="Lyase_1"/>
    <property type="match status" value="1"/>
</dbReference>
<dbReference type="PRINTS" id="PR00145">
    <property type="entry name" value="ARGSUCLYASE"/>
</dbReference>
<dbReference type="PRINTS" id="PR00149">
    <property type="entry name" value="FUMRATELYASE"/>
</dbReference>
<dbReference type="SUPFAM" id="SSF48557">
    <property type="entry name" value="L-aspartase-like"/>
    <property type="match status" value="1"/>
</dbReference>
<dbReference type="PROSITE" id="PS00163">
    <property type="entry name" value="FUMARATE_LYASES"/>
    <property type="match status" value="1"/>
</dbReference>
<proteinExistence type="evidence at protein level"/>
<keyword id="KW-0028">Amino-acid biosynthesis</keyword>
<keyword id="KW-0055">Arginine biosynthesis</keyword>
<keyword id="KW-0963">Cytoplasm</keyword>
<keyword id="KW-0456">Lyase</keyword>
<keyword id="KW-1185">Reference proteome</keyword>
<sequence>MTKKTWSDRFEGTLHPAIALFNASIGFDIELIEYDLDGSIAHGKMLAKTGIISPGEAEQLVQGLEQIRQEYRAGNFNPGVDQEDVHFAVERRLTELVGDVGKKLHTARSRNDQVGTDVRLYLRAQIDDIRQRLRDFQAVLLQLAETNVETLIPGYTHLQRAQPVSLAHHLLAYFQMAQRDWQRLGEIRARTNVSPLGSGALAGTTFPIDRHYSAELLGFAGVYANSLDGVSDRDFAIEFLNAASLIMVHLSRLSEEMILWASQEFSFISLTDSCATGSSIMPQKKNPDVPELIRGKAGRVMGHLQGMLVLMKGLPLAYNKDLQEDKEALFDAVKTVQVSLEAMTILLDEGIVFRQERLAEAVAEDFSNATDVADYLAAKGVPFREAYNLVGKVVKTSLAAGKLLKDLTLAEWQALHPAFEEDIYQAITPQQVVAARNSYGGTGFEQVKMAIANAKAELSQT</sequence>
<organism>
    <name type="scientific">Synechocystis sp. (strain ATCC 27184 / PCC 6803 / Kazusa)</name>
    <dbReference type="NCBI Taxonomy" id="1111708"/>
    <lineage>
        <taxon>Bacteria</taxon>
        <taxon>Bacillati</taxon>
        <taxon>Cyanobacteriota</taxon>
        <taxon>Cyanophyceae</taxon>
        <taxon>Synechococcales</taxon>
        <taxon>Merismopediaceae</taxon>
        <taxon>Synechocystis</taxon>
    </lineage>
</organism>
<accession>P73257</accession>
<protein>
    <recommendedName>
        <fullName evidence="1 4">Argininosuccinate lyase</fullName>
        <shortName evidence="1">ASAL</shortName>
        <ecNumber evidence="1 2">4.3.2.1</ecNumber>
    </recommendedName>
    <alternativeName>
        <fullName evidence="1">Arginosuccinase</fullName>
    </alternativeName>
    <alternativeName>
        <fullName evidence="4">SyArgH</fullName>
    </alternativeName>
</protein>
<reference key="1">
    <citation type="journal article" date="1996" name="DNA Res.">
        <title>Sequence analysis of the genome of the unicellular cyanobacterium Synechocystis sp. strain PCC6803. II. Sequence determination of the entire genome and assignment of potential protein-coding regions.</title>
        <authorList>
            <person name="Kaneko T."/>
            <person name="Sato S."/>
            <person name="Kotani H."/>
            <person name="Tanaka A."/>
            <person name="Asamizu E."/>
            <person name="Nakamura Y."/>
            <person name="Miyajima N."/>
            <person name="Hirosawa M."/>
            <person name="Sugiura M."/>
            <person name="Sasamoto S."/>
            <person name="Kimura T."/>
            <person name="Hosouchi T."/>
            <person name="Matsuno A."/>
            <person name="Muraki A."/>
            <person name="Nakazaki N."/>
            <person name="Naruo K."/>
            <person name="Okumura S."/>
            <person name="Shimpo S."/>
            <person name="Takeuchi C."/>
            <person name="Wada T."/>
            <person name="Watanabe A."/>
            <person name="Yamada M."/>
            <person name="Yasuda M."/>
            <person name="Tabata S."/>
        </authorList>
    </citation>
    <scope>NUCLEOTIDE SEQUENCE [LARGE SCALE GENOMIC DNA]</scope>
    <source>
        <strain>ATCC 27184 / PCC 6803 / Kazusa</strain>
    </source>
</reference>
<reference key="2">
    <citation type="journal article" date="2022" name="Plant Mol. Biol.">
        <title>Arginine inhibition of the argininosuccinate lyases is conserved among three orders in cyanobacteria.</title>
        <authorList>
            <person name="Katayama N."/>
            <person name="Osanai T."/>
        </authorList>
    </citation>
    <scope>FUNCTION</scope>
    <scope>CATALYTIC ACTIVITY</scope>
    <scope>ACTIVITY REGULATION</scope>
    <scope>BIOPHYSICOCHEMICAL PROPERTIES</scope>
    <source>
        <strain>ATCC 27184 / PCC 6803 / Kazusa</strain>
    </source>
</reference>
<reference key="3">
    <citation type="journal article" date="2024" name="Plant Mol. Biol.">
        <title>Arginine inhibits the arginine biosynthesis rate-limiting enzyme and leads to the accumulation of intracellular aspartate in Synechocystis sp. PCC 6803.</title>
        <authorList>
            <person name="Katayama N."/>
            <person name="Osanai T."/>
        </authorList>
    </citation>
    <scope>OVEREXPRESSION</scope>
    <source>
        <strain>ATCC 27184 / PCC 6803 / Kazusa</strain>
    </source>
</reference>
<feature type="chain" id="PRO_0000137841" description="Argininosuccinate lyase">
    <location>
        <begin position="1"/>
        <end position="461"/>
    </location>
</feature>